<reference key="1">
    <citation type="journal article" date="2005" name="Genome Res.">
        <title>Complete genome sequence of the hyperthermophilic archaeon Thermococcus kodakaraensis KOD1 and comparison with Pyrococcus genomes.</title>
        <authorList>
            <person name="Fukui T."/>
            <person name="Atomi H."/>
            <person name="Kanai T."/>
            <person name="Matsumi R."/>
            <person name="Fujiwara S."/>
            <person name="Imanaka T."/>
        </authorList>
    </citation>
    <scope>NUCLEOTIDE SEQUENCE [LARGE SCALE GENOMIC DNA]</scope>
    <source>
        <strain>ATCC BAA-918 / JCM 12380 / KOD1</strain>
    </source>
</reference>
<sequence length="163" mass="17825">MITRGRVWRFGDNVSTDTITPGRYNLTKDPEELARIAFIEARPEFSREVKPGDVVVGGRNFGIGSSRESAALSLKAAGVAGVIAESFGRIFYRNAVNLGLPLLVGDTSGLRDGEVVEVNWRTGEVRTENGVFHFKPLDGFLLRIVEEGGILSFIARRGDLCIE</sequence>
<proteinExistence type="inferred from homology"/>
<keyword id="KW-0028">Amino-acid biosynthesis</keyword>
<keyword id="KW-0100">Branched-chain amino acid biosynthesis</keyword>
<keyword id="KW-0432">Leucine biosynthesis</keyword>
<keyword id="KW-0456">Lyase</keyword>
<keyword id="KW-1185">Reference proteome</keyword>
<name>LEUD_THEKO</name>
<evidence type="ECO:0000255" key="1">
    <source>
        <dbReference type="HAMAP-Rule" id="MF_01032"/>
    </source>
</evidence>
<gene>
    <name evidence="1" type="primary">leuD</name>
    <name type="ordered locus">TK0281</name>
</gene>
<organism>
    <name type="scientific">Thermococcus kodakarensis (strain ATCC BAA-918 / JCM 12380 / KOD1)</name>
    <name type="common">Pyrococcus kodakaraensis (strain KOD1)</name>
    <dbReference type="NCBI Taxonomy" id="69014"/>
    <lineage>
        <taxon>Archaea</taxon>
        <taxon>Methanobacteriati</taxon>
        <taxon>Methanobacteriota</taxon>
        <taxon>Thermococci</taxon>
        <taxon>Thermococcales</taxon>
        <taxon>Thermococcaceae</taxon>
        <taxon>Thermococcus</taxon>
    </lineage>
</organism>
<protein>
    <recommendedName>
        <fullName evidence="1">3-isopropylmalate dehydratase small subunit</fullName>
        <ecNumber evidence="1">4.2.1.33</ecNumber>
    </recommendedName>
    <alternativeName>
        <fullName evidence="1">Alpha-IPM isomerase</fullName>
        <shortName evidence="1">IPMI</shortName>
    </alternativeName>
    <alternativeName>
        <fullName evidence="1">Isopropylmalate isomerase</fullName>
    </alternativeName>
</protein>
<comment type="function">
    <text evidence="1">Catalyzes the isomerization between 2-isopropylmalate and 3-isopropylmalate, via the formation of 2-isopropylmaleate.</text>
</comment>
<comment type="catalytic activity">
    <reaction evidence="1">
        <text>(2R,3S)-3-isopropylmalate = (2S)-2-isopropylmalate</text>
        <dbReference type="Rhea" id="RHEA:32287"/>
        <dbReference type="ChEBI" id="CHEBI:1178"/>
        <dbReference type="ChEBI" id="CHEBI:35121"/>
        <dbReference type="EC" id="4.2.1.33"/>
    </reaction>
</comment>
<comment type="pathway">
    <text evidence="1">Amino-acid biosynthesis; L-leucine biosynthesis; L-leucine from 3-methyl-2-oxobutanoate: step 2/4.</text>
</comment>
<comment type="subunit">
    <text evidence="1">Heterodimer of LeuC and LeuD.</text>
</comment>
<comment type="similarity">
    <text evidence="1">Belongs to the LeuD family. LeuD type 2 subfamily.</text>
</comment>
<dbReference type="EC" id="4.2.1.33" evidence="1"/>
<dbReference type="EMBL" id="AP006878">
    <property type="protein sequence ID" value="BAD84470.1"/>
    <property type="molecule type" value="Genomic_DNA"/>
</dbReference>
<dbReference type="RefSeq" id="WP_011249236.1">
    <property type="nucleotide sequence ID" value="NC_006624.1"/>
</dbReference>
<dbReference type="SMR" id="Q5JFV7"/>
<dbReference type="FunCoup" id="Q5JFV7">
    <property type="interactions" value="64"/>
</dbReference>
<dbReference type="STRING" id="69014.TK0281"/>
<dbReference type="EnsemblBacteria" id="BAD84470">
    <property type="protein sequence ID" value="BAD84470"/>
    <property type="gene ID" value="TK0281"/>
</dbReference>
<dbReference type="GeneID" id="78446783"/>
<dbReference type="KEGG" id="tko:TK0281"/>
<dbReference type="PATRIC" id="fig|69014.16.peg.280"/>
<dbReference type="eggNOG" id="arCOG02230">
    <property type="taxonomic scope" value="Archaea"/>
</dbReference>
<dbReference type="HOGENOM" id="CLU_081378_1_1_2"/>
<dbReference type="InParanoid" id="Q5JFV7"/>
<dbReference type="OrthoDB" id="6505at2157"/>
<dbReference type="PhylomeDB" id="Q5JFV7"/>
<dbReference type="UniPathway" id="UPA00048">
    <property type="reaction ID" value="UER00071"/>
</dbReference>
<dbReference type="Proteomes" id="UP000000536">
    <property type="component" value="Chromosome"/>
</dbReference>
<dbReference type="GO" id="GO:0003861">
    <property type="term" value="F:3-isopropylmalate dehydratase activity"/>
    <property type="evidence" value="ECO:0007669"/>
    <property type="project" value="UniProtKB-UniRule"/>
</dbReference>
<dbReference type="GO" id="GO:0009098">
    <property type="term" value="P:L-leucine biosynthetic process"/>
    <property type="evidence" value="ECO:0007669"/>
    <property type="project" value="UniProtKB-UniRule"/>
</dbReference>
<dbReference type="Gene3D" id="3.20.19.10">
    <property type="entry name" value="Aconitase, domain 4"/>
    <property type="match status" value="1"/>
</dbReference>
<dbReference type="HAMAP" id="MF_01032">
    <property type="entry name" value="LeuD_type2"/>
    <property type="match status" value="1"/>
</dbReference>
<dbReference type="InterPro" id="IPR015928">
    <property type="entry name" value="Aconitase/3IPM_dehydase_swvl"/>
</dbReference>
<dbReference type="InterPro" id="IPR000573">
    <property type="entry name" value="AconitaseA/IPMdHydase_ssu_swvl"/>
</dbReference>
<dbReference type="InterPro" id="IPR050075">
    <property type="entry name" value="LeuD"/>
</dbReference>
<dbReference type="InterPro" id="IPR011827">
    <property type="entry name" value="LeuD_type2/HacB/DmdB"/>
</dbReference>
<dbReference type="NCBIfam" id="TIGR02087">
    <property type="entry name" value="LEUD_arch"/>
    <property type="match status" value="1"/>
</dbReference>
<dbReference type="PANTHER" id="PTHR43345:SF9">
    <property type="entry name" value="3-ISOPROPYLMALATE DEHYDRATASE SMALL SUBUNIT"/>
    <property type="match status" value="1"/>
</dbReference>
<dbReference type="PANTHER" id="PTHR43345">
    <property type="entry name" value="3-ISOPROPYLMALATE DEHYDRATASE SMALL SUBUNIT 2-RELATED-RELATED"/>
    <property type="match status" value="1"/>
</dbReference>
<dbReference type="Pfam" id="PF00694">
    <property type="entry name" value="Aconitase_C"/>
    <property type="match status" value="1"/>
</dbReference>
<dbReference type="SUPFAM" id="SSF52016">
    <property type="entry name" value="LeuD/IlvD-like"/>
    <property type="match status" value="1"/>
</dbReference>
<feature type="chain" id="PRO_0000141950" description="3-isopropylmalate dehydratase small subunit">
    <location>
        <begin position="1"/>
        <end position="163"/>
    </location>
</feature>
<accession>Q5JFV7</accession>